<keyword id="KW-0240">DNA-directed RNA polymerase</keyword>
<keyword id="KW-0479">Metal-binding</keyword>
<keyword id="KW-0539">Nucleus</keyword>
<keyword id="KW-1185">Reference proteome</keyword>
<keyword id="KW-0943">RNA-mediated gene silencing</keyword>
<keyword id="KW-0804">Transcription</keyword>
<keyword id="KW-0862">Zinc</keyword>
<keyword id="KW-0863">Zinc-finger</keyword>
<comment type="function">
    <text evidence="2 7 9">DNA-dependent RNA polymerase catalyzes the transcription of DNA into RNA using the four ribonucleoside triphosphates as substrates (By similarity). Component of RNA polymerase II which synthesizes mRNA precursors and many functional non-coding RNAs (Probable). Pol II is the central component of the basal RNA polymerase II transcription machinery (By similarity). It is composed of mobile elements that move relative to each other (By similarity). RPB9 is part of the upper jaw surrounding the central large cleft and thought to grab the incoming DNA template (By similarity). Recruits ints-6, a component of the Integrator complex to PIWI-interacting RNA (piRNA) genes, to mediate Integrator complex-dependent cleavage of 3' ends of nascent transcripts upon RNA Pol II backtracking to terminate transcription and generate piRNA precursors (PubMed:33533030). Promotes the biogenesis of secondary 22G-siRNAs (a class of 22 nucleotide siRNAs that possess a triphosphorylated guanine residue at the 5'-end) (PubMed:33533030). Involved in gene silencing mediated by a class of 21 nucleotide piRNAs that possess a uracil residue at the 5'-end (also called 21U-RNAs) and guide the Piwi protein prg-1 to its DNA targets for silencing (PubMed:33533030). Plays a role in small RNA-directed transgenerational epigenetic inheritance (also called RNAe) over several generations (PubMed:33533030). Not required for the transgenerational inheritance of exogenous small interfering RNAs (RNAi) (PubMed:33533030). May play a role in the silencing of the DNA transposable elements from the DNA transposon families, Chapaev-2 and CEMUDR1 (PubMed:33533030).</text>
</comment>
<comment type="subunit">
    <text evidence="9">Component of the RNA polymerase II (Pol II) complex consisting of 12 subunits.</text>
</comment>
<comment type="subcellular location">
    <subcellularLocation>
        <location evidence="2">Nucleus</location>
        <location evidence="2">Nucleolus</location>
    </subcellularLocation>
</comment>
<comment type="tissue specificity">
    <text evidence="7">Expressed in the soma and in the germline.</text>
</comment>
<comment type="similarity">
    <text evidence="8">Belongs to the archaeal RpoM/eukaryotic RPA12/RPB9/RPC11 RNA polymerase family.</text>
</comment>
<sequence>MYLQLKSKLENVLSYFFRKMSQGYDNYDDMYDQNGASPAPSQNEKPGKSGPGFVGIKFCPECNNMLYPREDKESRVLMYSCRNCEHREVAANPCIYVNKLVHEIDELTQIVGDIIHDPTLPKTEEHQCPVCGKSKAVFFQAQTKKAEEEMRLYYVCASQDCQHRWTE</sequence>
<accession>Q965S0</accession>
<reference evidence="10" key="1">
    <citation type="journal article" date="1998" name="Science">
        <title>Genome sequence of the nematode C. elegans: a platform for investigating biology.</title>
        <authorList>
            <consortium name="The C. elegans sequencing consortium"/>
        </authorList>
    </citation>
    <scope>NUCLEOTIDE SEQUENCE [LARGE SCALE GENOMIC DNA]</scope>
    <source>
        <strain evidence="10">Bristol N2</strain>
    </source>
</reference>
<reference evidence="8" key="2">
    <citation type="journal article" date="2021" name="EMBO J.">
        <title>The RNA polymerase II subunit RPB-9 recruits the integrator complex to terminate Caenorhabditis elegans piRNA transcription.</title>
        <authorList>
            <person name="Berkyurek A.C."/>
            <person name="Furlan G."/>
            <person name="Lampersberger L."/>
            <person name="Beltran T."/>
            <person name="Weick E.M."/>
            <person name="Nischwitz E."/>
            <person name="Cunha Navarro I."/>
            <person name="Braukmann F."/>
            <person name="Akay A."/>
            <person name="Price J."/>
            <person name="Butter F."/>
            <person name="Sarkies P."/>
            <person name="Miska E.A."/>
        </authorList>
    </citation>
    <scope>FUNCTION</scope>
    <scope>IDENTIFICATION IN THE RNA POLYMERASE II COMPLEX</scope>
    <scope>TISSUE SPECIFICITY</scope>
    <scope>MUTAGENESIS OF 140-GLN--GLU-167</scope>
</reference>
<gene>
    <name evidence="11" type="primary">rpb-9</name>
    <name evidence="11" type="ORF">Y97E10AR.5</name>
</gene>
<feature type="chain" id="PRO_0000453574" description="DNA-directed RNA polymerase II subunit rpb-9">
    <location>
        <begin position="1"/>
        <end position="167"/>
    </location>
</feature>
<feature type="zinc finger region" description="C4-type" evidence="3">
    <location>
        <begin position="59"/>
        <end position="84"/>
    </location>
</feature>
<feature type="zinc finger region" description="TFIIS-type" evidence="4">
    <location>
        <begin position="124"/>
        <end position="166"/>
    </location>
</feature>
<feature type="region of interest" description="Disordered" evidence="6">
    <location>
        <begin position="28"/>
        <end position="49"/>
    </location>
</feature>
<feature type="compositionally biased region" description="Polar residues" evidence="6">
    <location>
        <begin position="34"/>
        <end position="44"/>
    </location>
</feature>
<feature type="binding site" evidence="5">
    <location>
        <position position="59"/>
    </location>
    <ligand>
        <name>Zn(2+)</name>
        <dbReference type="ChEBI" id="CHEBI:29105"/>
        <label>1</label>
    </ligand>
</feature>
<feature type="binding site" evidence="5">
    <location>
        <position position="62"/>
    </location>
    <ligand>
        <name>Zn(2+)</name>
        <dbReference type="ChEBI" id="CHEBI:29105"/>
        <label>1</label>
    </ligand>
</feature>
<feature type="binding site" evidence="5">
    <location>
        <position position="81"/>
    </location>
    <ligand>
        <name>Zn(2+)</name>
        <dbReference type="ChEBI" id="CHEBI:29105"/>
        <label>1</label>
    </ligand>
</feature>
<feature type="binding site" evidence="5">
    <location>
        <position position="84"/>
    </location>
    <ligand>
        <name>Zn(2+)</name>
        <dbReference type="ChEBI" id="CHEBI:29105"/>
        <label>1</label>
    </ligand>
</feature>
<feature type="binding site" evidence="1">
    <location>
        <position position="128"/>
    </location>
    <ligand>
        <name>Zn(2+)</name>
        <dbReference type="ChEBI" id="CHEBI:29105"/>
        <label>2</label>
    </ligand>
</feature>
<feature type="binding site" evidence="1">
    <location>
        <position position="131"/>
    </location>
    <ligand>
        <name>Zn(2+)</name>
        <dbReference type="ChEBI" id="CHEBI:29105"/>
        <label>2</label>
    </ligand>
</feature>
<feature type="binding site" evidence="1">
    <location>
        <position position="156"/>
    </location>
    <ligand>
        <name>Zn(2+)</name>
        <dbReference type="ChEBI" id="CHEBI:29105"/>
        <label>2</label>
    </ligand>
</feature>
<feature type="binding site" evidence="1">
    <location>
        <position position="161"/>
    </location>
    <ligand>
        <name>Zn(2+)</name>
        <dbReference type="ChEBI" id="CHEBI:29105"/>
        <label>2</label>
    </ligand>
</feature>
<feature type="mutagenesis site" description="In mj261; defective gene silencing mediated by a class of 21 nucleotide PIWI-interacting RNAs (piRNAs) that possess a uracil residue at the 5'-end (also called 21U-RNAs). Reduces the levels of mature piRNAs. Disrupts the inheritance of endogenous small RNA-induced gene silencing. Does not disrupt the inheritance of exogenous small RNA-induced gene silencing. Reduces binding of RNA polymerase II to DNA transposable elements from the DNA transposon families, Chapaev-2 and CEMUDR1. Disrupts the accumulation of inst-6 at piRNA genes and as a results decreases the number of 20 nucleotide long 3' nascent RNA cleavage fragments, which is an indicator of reduced Integrator complex activity." evidence="7">
    <location>
        <begin position="140"/>
        <end position="167"/>
    </location>
</feature>
<organism evidence="10">
    <name type="scientific">Caenorhabditis elegans</name>
    <dbReference type="NCBI Taxonomy" id="6239"/>
    <lineage>
        <taxon>Eukaryota</taxon>
        <taxon>Metazoa</taxon>
        <taxon>Ecdysozoa</taxon>
        <taxon>Nematoda</taxon>
        <taxon>Chromadorea</taxon>
        <taxon>Rhabditida</taxon>
        <taxon>Rhabditina</taxon>
        <taxon>Rhabditomorpha</taxon>
        <taxon>Rhabditoidea</taxon>
        <taxon>Rhabditidae</taxon>
        <taxon>Peloderinae</taxon>
        <taxon>Caenorhabditis</taxon>
    </lineage>
</organism>
<proteinExistence type="evidence at protein level"/>
<name>RPB9_CAEEL</name>
<dbReference type="EMBL" id="BX284605">
    <property type="protein sequence ID" value="CCD71182.1"/>
    <property type="molecule type" value="Genomic_DNA"/>
</dbReference>
<dbReference type="RefSeq" id="NP_505062.1">
    <property type="nucleotide sequence ID" value="NM_072661.7"/>
</dbReference>
<dbReference type="SMR" id="Q965S0"/>
<dbReference type="FunCoup" id="Q965S0">
    <property type="interactions" value="1216"/>
</dbReference>
<dbReference type="STRING" id="6239.Y97E10AR.5.1"/>
<dbReference type="PaxDb" id="6239-Y97E10AR.5"/>
<dbReference type="PeptideAtlas" id="Q965S0"/>
<dbReference type="EnsemblMetazoa" id="Y97E10AR.5.1">
    <property type="protein sequence ID" value="Y97E10AR.5.1"/>
    <property type="gene ID" value="WBGene00022400"/>
</dbReference>
<dbReference type="GeneID" id="179178"/>
<dbReference type="KEGG" id="cel:CELE_Y97E10AR.5"/>
<dbReference type="UCSC" id="Y97E10AR.5">
    <property type="organism name" value="c. elegans"/>
</dbReference>
<dbReference type="AGR" id="WB:WBGene00022400"/>
<dbReference type="CTD" id="179178"/>
<dbReference type="WormBase" id="Y97E10AR.5">
    <property type="protein sequence ID" value="CE26319"/>
    <property type="gene ID" value="WBGene00022400"/>
    <property type="gene designation" value="rpb-9"/>
</dbReference>
<dbReference type="eggNOG" id="KOG2691">
    <property type="taxonomic scope" value="Eukaryota"/>
</dbReference>
<dbReference type="GeneTree" id="ENSGT00550000075063"/>
<dbReference type="HOGENOM" id="CLU_093932_0_0_1"/>
<dbReference type="InParanoid" id="Q965S0"/>
<dbReference type="OMA" id="DTSMVLF"/>
<dbReference type="OrthoDB" id="282270at2759"/>
<dbReference type="PhylomeDB" id="Q965S0"/>
<dbReference type="Reactome" id="R-CEL-112382">
    <property type="pathway name" value="Formation of RNA Pol II elongation complex"/>
</dbReference>
<dbReference type="Reactome" id="R-CEL-113418">
    <property type="pathway name" value="Formation of the Early Elongation Complex"/>
</dbReference>
<dbReference type="Reactome" id="R-CEL-5578749">
    <property type="pathway name" value="Transcriptional regulation by small RNAs"/>
</dbReference>
<dbReference type="Reactome" id="R-CEL-674695">
    <property type="pathway name" value="RNA Polymerase II Pre-transcription Events"/>
</dbReference>
<dbReference type="Reactome" id="R-CEL-6781823">
    <property type="pathway name" value="Formation of TC-NER Pre-Incision Complex"/>
</dbReference>
<dbReference type="Reactome" id="R-CEL-6782135">
    <property type="pathway name" value="Dual incision in TC-NER"/>
</dbReference>
<dbReference type="Reactome" id="R-CEL-6782210">
    <property type="pathway name" value="Gap-filling DNA repair synthesis and ligation in TC-NER"/>
</dbReference>
<dbReference type="Reactome" id="R-CEL-6796648">
    <property type="pathway name" value="TP53 Regulates Transcription of DNA Repair Genes"/>
</dbReference>
<dbReference type="Reactome" id="R-CEL-6803529">
    <property type="pathway name" value="FGFR2 alternative splicing"/>
</dbReference>
<dbReference type="Reactome" id="R-CEL-6807505">
    <property type="pathway name" value="RNA polymerase II transcribes snRNA genes"/>
</dbReference>
<dbReference type="Reactome" id="R-CEL-72086">
    <property type="pathway name" value="mRNA Capping"/>
</dbReference>
<dbReference type="Reactome" id="R-CEL-72163">
    <property type="pathway name" value="mRNA Splicing - Major Pathway"/>
</dbReference>
<dbReference type="Reactome" id="R-CEL-72165">
    <property type="pathway name" value="mRNA Splicing - Minor Pathway"/>
</dbReference>
<dbReference type="Reactome" id="R-CEL-72203">
    <property type="pathway name" value="Processing of Capped Intron-Containing Pre-mRNA"/>
</dbReference>
<dbReference type="Reactome" id="R-CEL-73776">
    <property type="pathway name" value="RNA Polymerase II Promoter Escape"/>
</dbReference>
<dbReference type="Reactome" id="R-CEL-73779">
    <property type="pathway name" value="RNA Polymerase II Transcription Pre-Initiation And Promoter Opening"/>
</dbReference>
<dbReference type="Reactome" id="R-CEL-75953">
    <property type="pathway name" value="RNA Polymerase II Transcription Initiation"/>
</dbReference>
<dbReference type="Reactome" id="R-CEL-75955">
    <property type="pathway name" value="RNA Polymerase II Transcription Elongation"/>
</dbReference>
<dbReference type="Reactome" id="R-CEL-76042">
    <property type="pathway name" value="RNA Polymerase II Transcription Initiation And Promoter Clearance"/>
</dbReference>
<dbReference type="Reactome" id="R-CEL-77075">
    <property type="pathway name" value="RNA Pol II CTD phosphorylation and interaction with CE"/>
</dbReference>
<dbReference type="Reactome" id="R-CEL-9018519">
    <property type="pathway name" value="Estrogen-dependent gene expression"/>
</dbReference>
<dbReference type="PRO" id="PR:Q965S0"/>
<dbReference type="Proteomes" id="UP000001940">
    <property type="component" value="Chromosome V"/>
</dbReference>
<dbReference type="Bgee" id="WBGene00022400">
    <property type="expression patterns" value="Expressed in germ line (C elegans) and 4 other cell types or tissues"/>
</dbReference>
<dbReference type="GO" id="GO:0005730">
    <property type="term" value="C:nucleolus"/>
    <property type="evidence" value="ECO:0007669"/>
    <property type="project" value="UniProtKB-SubCell"/>
</dbReference>
<dbReference type="GO" id="GO:0005665">
    <property type="term" value="C:RNA polymerase II, core complex"/>
    <property type="evidence" value="ECO:0000318"/>
    <property type="project" value="GO_Central"/>
</dbReference>
<dbReference type="GO" id="GO:0003899">
    <property type="term" value="F:DNA-directed RNA polymerase activity"/>
    <property type="evidence" value="ECO:0007669"/>
    <property type="project" value="InterPro"/>
</dbReference>
<dbReference type="GO" id="GO:0003676">
    <property type="term" value="F:nucleic acid binding"/>
    <property type="evidence" value="ECO:0007669"/>
    <property type="project" value="InterPro"/>
</dbReference>
<dbReference type="GO" id="GO:0008270">
    <property type="term" value="F:zinc ion binding"/>
    <property type="evidence" value="ECO:0007669"/>
    <property type="project" value="UniProtKB-KW"/>
</dbReference>
<dbReference type="GO" id="GO:0001193">
    <property type="term" value="P:maintenance of transcriptional fidelity during transcription elongation by RNA polymerase II"/>
    <property type="evidence" value="ECO:0000318"/>
    <property type="project" value="GO_Central"/>
</dbReference>
<dbReference type="GO" id="GO:0031047">
    <property type="term" value="P:regulatory ncRNA-mediated gene silencing"/>
    <property type="evidence" value="ECO:0007669"/>
    <property type="project" value="UniProtKB-KW"/>
</dbReference>
<dbReference type="GO" id="GO:0006367">
    <property type="term" value="P:transcription initiation at RNA polymerase II promoter"/>
    <property type="evidence" value="ECO:0000318"/>
    <property type="project" value="GO_Central"/>
</dbReference>
<dbReference type="GO" id="GO:0006283">
    <property type="term" value="P:transcription-coupled nucleotide-excision repair"/>
    <property type="evidence" value="ECO:0000318"/>
    <property type="project" value="GO_Central"/>
</dbReference>
<dbReference type="CDD" id="cd10508">
    <property type="entry name" value="Zn-ribbon_RPB9"/>
    <property type="match status" value="1"/>
</dbReference>
<dbReference type="FunFam" id="2.20.25.10:FF:000004">
    <property type="entry name" value="DNA-directed RNA polymerase subunit"/>
    <property type="match status" value="1"/>
</dbReference>
<dbReference type="FunFam" id="2.20.25.10:FF:000009">
    <property type="entry name" value="DNA-directed RNA polymerase subunit"/>
    <property type="match status" value="1"/>
</dbReference>
<dbReference type="Gene3D" id="2.20.25.10">
    <property type="match status" value="2"/>
</dbReference>
<dbReference type="InterPro" id="IPR019761">
    <property type="entry name" value="DNA-dir_RNA_pol-M_15_CS"/>
</dbReference>
<dbReference type="InterPro" id="IPR012164">
    <property type="entry name" value="Rpa12/Rpb9/Rpc10/TFS"/>
</dbReference>
<dbReference type="InterPro" id="IPR001529">
    <property type="entry name" value="Zn_ribbon_RPB9"/>
</dbReference>
<dbReference type="InterPro" id="IPR034012">
    <property type="entry name" value="Zn_ribbon_RPB9_C"/>
</dbReference>
<dbReference type="InterPro" id="IPR001222">
    <property type="entry name" value="Znf_TFIIS"/>
</dbReference>
<dbReference type="PANTHER" id="PTHR11239">
    <property type="entry name" value="DNA-DIRECTED RNA POLYMERASE"/>
    <property type="match status" value="1"/>
</dbReference>
<dbReference type="PANTHER" id="PTHR11239:SF1">
    <property type="entry name" value="DNA-DIRECTED RNA POLYMERASE II SUBUNIT RPB9"/>
    <property type="match status" value="1"/>
</dbReference>
<dbReference type="Pfam" id="PF02150">
    <property type="entry name" value="Zn_ribbon_RPB9"/>
    <property type="match status" value="1"/>
</dbReference>
<dbReference type="Pfam" id="PF01096">
    <property type="entry name" value="Zn_ribbon_TFIIS"/>
    <property type="match status" value="1"/>
</dbReference>
<dbReference type="SMART" id="SM00661">
    <property type="entry name" value="RPOL9"/>
    <property type="match status" value="1"/>
</dbReference>
<dbReference type="SMART" id="SM00440">
    <property type="entry name" value="ZnF_C2C2"/>
    <property type="match status" value="1"/>
</dbReference>
<dbReference type="SUPFAM" id="SSF57783">
    <property type="entry name" value="Zinc beta-ribbon"/>
    <property type="match status" value="2"/>
</dbReference>
<dbReference type="PROSITE" id="PS01030">
    <property type="entry name" value="RNA_POL_M_15KD"/>
    <property type="match status" value="1"/>
</dbReference>
<dbReference type="PROSITE" id="PS51133">
    <property type="entry name" value="ZF_TFIIS_2"/>
    <property type="match status" value="1"/>
</dbReference>
<protein>
    <recommendedName>
        <fullName evidence="8">DNA-directed RNA polymerase II subunit rpb-9</fullName>
        <shortName evidence="8">RNA polymerase II subunit B9</shortName>
    </recommendedName>
    <alternativeName>
        <fullName evidence="8">DNA-directed RNA polymerase II subunit 9</fullName>
    </alternativeName>
</protein>
<evidence type="ECO:0000250" key="1">
    <source>
        <dbReference type="UniProtKB" id="P27999"/>
    </source>
</evidence>
<evidence type="ECO:0000250" key="2">
    <source>
        <dbReference type="UniProtKB" id="P36954"/>
    </source>
</evidence>
<evidence type="ECO:0000255" key="3"/>
<evidence type="ECO:0000255" key="4">
    <source>
        <dbReference type="PROSITE-ProRule" id="PRU00472"/>
    </source>
</evidence>
<evidence type="ECO:0000255" key="5">
    <source>
        <dbReference type="PROSITE-ProRule" id="PRU10145"/>
    </source>
</evidence>
<evidence type="ECO:0000256" key="6">
    <source>
        <dbReference type="SAM" id="MobiDB-lite"/>
    </source>
</evidence>
<evidence type="ECO:0000269" key="7">
    <source>
    </source>
</evidence>
<evidence type="ECO:0000305" key="8"/>
<evidence type="ECO:0000305" key="9">
    <source>
    </source>
</evidence>
<evidence type="ECO:0000312" key="10">
    <source>
        <dbReference type="Proteomes" id="UP000001940"/>
    </source>
</evidence>
<evidence type="ECO:0000312" key="11">
    <source>
        <dbReference type="WormBase" id="Y97E10AR.5"/>
    </source>
</evidence>